<keyword id="KW-0030">Aminoacyl-tRNA synthetase</keyword>
<keyword id="KW-0067">ATP-binding</keyword>
<keyword id="KW-0963">Cytoplasm</keyword>
<keyword id="KW-0436">Ligase</keyword>
<keyword id="KW-0547">Nucleotide-binding</keyword>
<keyword id="KW-0648">Protein biosynthesis</keyword>
<keyword id="KW-1185">Reference proteome</keyword>
<feature type="chain" id="PRO_0000119726" description="Glutamate--tRNA ligase">
    <location>
        <begin position="1"/>
        <end position="570"/>
    </location>
</feature>
<feature type="short sequence motif" description="'HIGH' region" evidence="1">
    <location>
        <begin position="107"/>
        <end position="117"/>
    </location>
</feature>
<proteinExistence type="inferred from homology"/>
<gene>
    <name evidence="1" type="primary">gltX</name>
    <name type="ordered locus">PAE2969</name>
</gene>
<dbReference type="EC" id="6.1.1.17" evidence="1"/>
<dbReference type="EMBL" id="AE009441">
    <property type="protein sequence ID" value="AAL64575.1"/>
    <property type="molecule type" value="Genomic_DNA"/>
</dbReference>
<dbReference type="RefSeq" id="WP_011009043.1">
    <property type="nucleotide sequence ID" value="NC_003364.1"/>
</dbReference>
<dbReference type="SMR" id="Q8ZU33"/>
<dbReference type="FunCoup" id="Q8ZU33">
    <property type="interactions" value="336"/>
</dbReference>
<dbReference type="STRING" id="178306.PAE2969"/>
<dbReference type="EnsemblBacteria" id="AAL64575">
    <property type="protein sequence ID" value="AAL64575"/>
    <property type="gene ID" value="PAE2969"/>
</dbReference>
<dbReference type="GeneID" id="1463740"/>
<dbReference type="KEGG" id="pai:PAE2969"/>
<dbReference type="PATRIC" id="fig|178306.9.peg.2226"/>
<dbReference type="eggNOG" id="arCOG04302">
    <property type="taxonomic scope" value="Archaea"/>
</dbReference>
<dbReference type="HOGENOM" id="CLU_001882_1_3_2"/>
<dbReference type="InParanoid" id="Q8ZU33"/>
<dbReference type="Proteomes" id="UP000002439">
    <property type="component" value="Chromosome"/>
</dbReference>
<dbReference type="GO" id="GO:0005829">
    <property type="term" value="C:cytosol"/>
    <property type="evidence" value="ECO:0000318"/>
    <property type="project" value="GO_Central"/>
</dbReference>
<dbReference type="GO" id="GO:0005524">
    <property type="term" value="F:ATP binding"/>
    <property type="evidence" value="ECO:0007669"/>
    <property type="project" value="UniProtKB-UniRule"/>
</dbReference>
<dbReference type="GO" id="GO:0004818">
    <property type="term" value="F:glutamate-tRNA ligase activity"/>
    <property type="evidence" value="ECO:0007669"/>
    <property type="project" value="UniProtKB-UniRule"/>
</dbReference>
<dbReference type="GO" id="GO:0006424">
    <property type="term" value="P:glutamyl-tRNA aminoacylation"/>
    <property type="evidence" value="ECO:0007669"/>
    <property type="project" value="UniProtKB-UniRule"/>
</dbReference>
<dbReference type="CDD" id="cd09287">
    <property type="entry name" value="GluRS_non_core"/>
    <property type="match status" value="1"/>
</dbReference>
<dbReference type="FunFam" id="2.40.240.10:FF:000033">
    <property type="entry name" value="Glutamate--tRNA ligase"/>
    <property type="match status" value="1"/>
</dbReference>
<dbReference type="FunFam" id="3.40.50.620:FF:000222">
    <property type="entry name" value="Glutamate--tRNA ligase"/>
    <property type="match status" value="1"/>
</dbReference>
<dbReference type="Gene3D" id="3.40.50.620">
    <property type="entry name" value="HUPs"/>
    <property type="match status" value="1"/>
</dbReference>
<dbReference type="Gene3D" id="2.40.240.10">
    <property type="entry name" value="Ribosomal Protein L25, Chain P"/>
    <property type="match status" value="1"/>
</dbReference>
<dbReference type="HAMAP" id="MF_02076">
    <property type="entry name" value="Glu_tRNA_synth_type2"/>
    <property type="match status" value="1"/>
</dbReference>
<dbReference type="InterPro" id="IPR050132">
    <property type="entry name" value="Gln/Glu-tRNA_Ligase"/>
</dbReference>
<dbReference type="InterPro" id="IPR004526">
    <property type="entry name" value="Glu-tRNA-synth_arc/euk"/>
</dbReference>
<dbReference type="InterPro" id="IPR000924">
    <property type="entry name" value="Glu/Gln-tRNA-synth"/>
</dbReference>
<dbReference type="InterPro" id="IPR020058">
    <property type="entry name" value="Glu/Gln-tRNA-synth_Ib_cat-dom"/>
</dbReference>
<dbReference type="InterPro" id="IPR020059">
    <property type="entry name" value="Glu/Gln-tRNA-synth_Ib_codon-bd"/>
</dbReference>
<dbReference type="InterPro" id="IPR020056">
    <property type="entry name" value="Rbsml_bL25/Gln-tRNA_synth_N"/>
</dbReference>
<dbReference type="InterPro" id="IPR011035">
    <property type="entry name" value="Ribosomal_bL25/Gln-tRNA_synth"/>
</dbReference>
<dbReference type="InterPro" id="IPR014729">
    <property type="entry name" value="Rossmann-like_a/b/a_fold"/>
</dbReference>
<dbReference type="NCBIfam" id="TIGR00463">
    <property type="entry name" value="gltX_arch"/>
    <property type="match status" value="1"/>
</dbReference>
<dbReference type="NCBIfam" id="NF003169">
    <property type="entry name" value="PRK04156.1"/>
    <property type="match status" value="1"/>
</dbReference>
<dbReference type="PANTHER" id="PTHR43097:SF5">
    <property type="entry name" value="GLUTAMATE--TRNA LIGASE"/>
    <property type="match status" value="1"/>
</dbReference>
<dbReference type="PANTHER" id="PTHR43097">
    <property type="entry name" value="GLUTAMINE-TRNA LIGASE"/>
    <property type="match status" value="1"/>
</dbReference>
<dbReference type="Pfam" id="PF00749">
    <property type="entry name" value="tRNA-synt_1c"/>
    <property type="match status" value="1"/>
</dbReference>
<dbReference type="Pfam" id="PF03950">
    <property type="entry name" value="tRNA-synt_1c_C"/>
    <property type="match status" value="1"/>
</dbReference>
<dbReference type="PRINTS" id="PR00987">
    <property type="entry name" value="TRNASYNTHGLU"/>
</dbReference>
<dbReference type="SUPFAM" id="SSF52374">
    <property type="entry name" value="Nucleotidylyl transferase"/>
    <property type="match status" value="1"/>
</dbReference>
<dbReference type="SUPFAM" id="SSF50715">
    <property type="entry name" value="Ribosomal protein L25-like"/>
    <property type="match status" value="1"/>
</dbReference>
<evidence type="ECO:0000255" key="1">
    <source>
        <dbReference type="HAMAP-Rule" id="MF_02076"/>
    </source>
</evidence>
<accession>Q8ZU33</accession>
<comment type="function">
    <text evidence="1">Catalyzes the attachment of glutamate to tRNA(Glu) in a two-step reaction: glutamate is first activated by ATP to form Glu-AMP and then transferred to the acceptor end of tRNA(Glu).</text>
</comment>
<comment type="catalytic activity">
    <reaction evidence="1">
        <text>tRNA(Glu) + L-glutamate + ATP = L-glutamyl-tRNA(Glu) + AMP + diphosphate</text>
        <dbReference type="Rhea" id="RHEA:23540"/>
        <dbReference type="Rhea" id="RHEA-COMP:9663"/>
        <dbReference type="Rhea" id="RHEA-COMP:9680"/>
        <dbReference type="ChEBI" id="CHEBI:29985"/>
        <dbReference type="ChEBI" id="CHEBI:30616"/>
        <dbReference type="ChEBI" id="CHEBI:33019"/>
        <dbReference type="ChEBI" id="CHEBI:78442"/>
        <dbReference type="ChEBI" id="CHEBI:78520"/>
        <dbReference type="ChEBI" id="CHEBI:456215"/>
        <dbReference type="EC" id="6.1.1.17"/>
    </reaction>
</comment>
<comment type="subcellular location">
    <subcellularLocation>
        <location evidence="1">Cytoplasm</location>
    </subcellularLocation>
</comment>
<comment type="similarity">
    <text evidence="1">Belongs to the class-I aminoacyl-tRNA synthetase family. Glutamate--tRNA ligase type 2 subfamily.</text>
</comment>
<sequence>MNVEEIAFKYALANAVKYGGKADVKAVMAKLMAEVPELRARAREVKQIVDAVVARVNSMPLEEQRRILRERWPELLEERRAEQRRPGLEGLPELPNVRGGVVVRFAPNPDFVLHLGSARPAILNYAYRIKYGGKFILRFEDTDPRIKSPLVTEEVNAYESIREDLRWLGVRWDEEYIQSQRMEIYYEHAKKLLEMGAAYVDLCKPEEWRRLRNEKKACPHREQPPEVNLELWDKMLEGRFKEGEAVLRIKTDLTHPDPSVRDWVAFRIIDTSKTPHPLTGDKYIVWPTYNFAVSIDDHLMGVTHVLRAQEHSVNTIKQSYVFRHFGWEQPVTIHFGRLRIEGATLSKSKLKAMRIKYDDLTLPTLAGLRNRGIVPEAIWDLILSVGIKPSDSTVALANLFAFNRKHIEPIADRYMYVADPVKLVFEADKELTAHVPFHPSFKERGERTYRLGPGRVEVYIQRRDAVAGKVVRLMELANVEIVRVEGDVAYGRIHSYSLDEAKKIGAPIIQWVWDPVEITVIKPAGVGRKEVEVGLGEGWLERVEVGKYVQFFRYGYLKKRGPREFVFLHD</sequence>
<protein>
    <recommendedName>
        <fullName evidence="1">Glutamate--tRNA ligase</fullName>
        <ecNumber evidence="1">6.1.1.17</ecNumber>
    </recommendedName>
    <alternativeName>
        <fullName evidence="1">Glutamyl-tRNA synthetase</fullName>
        <shortName evidence="1">GluRS</shortName>
    </alternativeName>
</protein>
<name>SYE_PYRAE</name>
<reference key="1">
    <citation type="journal article" date="2002" name="Proc. Natl. Acad. Sci. U.S.A.">
        <title>Genome sequence of the hyperthermophilic crenarchaeon Pyrobaculum aerophilum.</title>
        <authorList>
            <person name="Fitz-Gibbon S.T."/>
            <person name="Ladner H."/>
            <person name="Kim U.-J."/>
            <person name="Stetter K.O."/>
            <person name="Simon M.I."/>
            <person name="Miller J.H."/>
        </authorList>
    </citation>
    <scope>NUCLEOTIDE SEQUENCE [LARGE SCALE GENOMIC DNA]</scope>
    <source>
        <strain>ATCC 51768 / DSM 7523 / JCM 9630 / CIP 104966 / NBRC 100827 / IM2</strain>
    </source>
</reference>
<organism>
    <name type="scientific">Pyrobaculum aerophilum (strain ATCC 51768 / DSM 7523 / JCM 9630 / CIP 104966 / NBRC 100827 / IM2)</name>
    <dbReference type="NCBI Taxonomy" id="178306"/>
    <lineage>
        <taxon>Archaea</taxon>
        <taxon>Thermoproteota</taxon>
        <taxon>Thermoprotei</taxon>
        <taxon>Thermoproteales</taxon>
        <taxon>Thermoproteaceae</taxon>
        <taxon>Pyrobaculum</taxon>
    </lineage>
</organism>